<sequence length="477" mass="52822">MQVLHVCSEMFPLLKTGGLADVIGALPAAQIADGVDARVLLPAFPDIRRGVTDAQVVSRRDTFAGHITLLFGHYNGVGIYLIDAPHLYDRPGSPYHDTNLFAYTDNVLRFALLGWVGAEMASGLDPFWRPDVVHAHDWHAGLAPAYLAARGRPAKSVFTVHNLAYQGMFYAHHMNDIQLPWSFFNIHGLEFNGQISFLKAGLYYADHITAVSPTYAREITEPQFAYGMEGLLQQRHREGRLSGVLNGVDEKIWSPETDLLLASRYTRDTLEDKAENKRQLQIAMGLKVDDKVPLFAVVSRLTSQKGLDLVLEALPGLLEQGGQLALLGAGDPVLQEGFLAAAAEYPGQVGVQIGYHEAFSHRIMGGADVILVPSRFEPCGLTQLYGLKYGTLPLVRRTGGLADTVSDCSLENLADGVASGFVFEDSNAWSLLRAIRRAFVLWSRPSLWRFVQRQAMAMDFSWQVAAKSYRELYYRLK</sequence>
<name>GLGA_ECO7I</name>
<keyword id="KW-0320">Glycogen biosynthesis</keyword>
<keyword id="KW-0328">Glycosyltransferase</keyword>
<keyword id="KW-0808">Transferase</keyword>
<gene>
    <name evidence="1" type="primary">glgA</name>
    <name type="ordered locus">ECIAI39_3910</name>
</gene>
<comment type="function">
    <text evidence="1">Synthesizes alpha-1,4-glucan chains using ADP-glucose.</text>
</comment>
<comment type="catalytic activity">
    <reaction evidence="1">
        <text>[(1-&gt;4)-alpha-D-glucosyl](n) + ADP-alpha-D-glucose = [(1-&gt;4)-alpha-D-glucosyl](n+1) + ADP + H(+)</text>
        <dbReference type="Rhea" id="RHEA:18189"/>
        <dbReference type="Rhea" id="RHEA-COMP:9584"/>
        <dbReference type="Rhea" id="RHEA-COMP:9587"/>
        <dbReference type="ChEBI" id="CHEBI:15378"/>
        <dbReference type="ChEBI" id="CHEBI:15444"/>
        <dbReference type="ChEBI" id="CHEBI:57498"/>
        <dbReference type="ChEBI" id="CHEBI:456216"/>
        <dbReference type="EC" id="2.4.1.21"/>
    </reaction>
</comment>
<comment type="pathway">
    <text evidence="1">Glycan biosynthesis; glycogen biosynthesis.</text>
</comment>
<comment type="similarity">
    <text evidence="1">Belongs to the glycosyltransferase 1 family. Bacterial/plant glycogen synthase subfamily.</text>
</comment>
<accession>B7NMJ4</accession>
<feature type="chain" id="PRO_1000126067" description="Glycogen synthase">
    <location>
        <begin position="1"/>
        <end position="477"/>
    </location>
</feature>
<feature type="binding site" evidence="1">
    <location>
        <position position="15"/>
    </location>
    <ligand>
        <name>ADP-alpha-D-glucose</name>
        <dbReference type="ChEBI" id="CHEBI:57498"/>
    </ligand>
</feature>
<dbReference type="EC" id="2.4.1.21" evidence="1"/>
<dbReference type="EMBL" id="CU928164">
    <property type="protein sequence ID" value="CAR20022.1"/>
    <property type="molecule type" value="Genomic_DNA"/>
</dbReference>
<dbReference type="RefSeq" id="WP_001197646.1">
    <property type="nucleotide sequence ID" value="NC_011750.1"/>
</dbReference>
<dbReference type="RefSeq" id="YP_002409803.1">
    <property type="nucleotide sequence ID" value="NC_011750.1"/>
</dbReference>
<dbReference type="SMR" id="B7NMJ4"/>
<dbReference type="STRING" id="585057.ECIAI39_3910"/>
<dbReference type="CAZy" id="GT5">
    <property type="family name" value="Glycosyltransferase Family 5"/>
</dbReference>
<dbReference type="GeneID" id="75202274"/>
<dbReference type="KEGG" id="ect:ECIAI39_3910"/>
<dbReference type="PATRIC" id="fig|585057.6.peg.4050"/>
<dbReference type="HOGENOM" id="CLU_009583_18_2_6"/>
<dbReference type="UniPathway" id="UPA00164"/>
<dbReference type="Proteomes" id="UP000000749">
    <property type="component" value="Chromosome"/>
</dbReference>
<dbReference type="GO" id="GO:0005829">
    <property type="term" value="C:cytosol"/>
    <property type="evidence" value="ECO:0007669"/>
    <property type="project" value="TreeGrafter"/>
</dbReference>
<dbReference type="GO" id="GO:0009011">
    <property type="term" value="F:alpha-1,4-glucan glucosyltransferase (ADP-glucose donor) activity"/>
    <property type="evidence" value="ECO:0007669"/>
    <property type="project" value="UniProtKB-UniRule"/>
</dbReference>
<dbReference type="GO" id="GO:0004373">
    <property type="term" value="F:alpha-1,4-glucan glucosyltransferase (UDP-glucose donor) activity"/>
    <property type="evidence" value="ECO:0007669"/>
    <property type="project" value="InterPro"/>
</dbReference>
<dbReference type="GO" id="GO:0005978">
    <property type="term" value="P:glycogen biosynthetic process"/>
    <property type="evidence" value="ECO:0007669"/>
    <property type="project" value="UniProtKB-UniRule"/>
</dbReference>
<dbReference type="CDD" id="cd03791">
    <property type="entry name" value="GT5_Glycogen_synthase_DULL1-like"/>
    <property type="match status" value="1"/>
</dbReference>
<dbReference type="FunFam" id="3.40.50.2000:FF:000008">
    <property type="entry name" value="Glycogen synthase"/>
    <property type="match status" value="1"/>
</dbReference>
<dbReference type="FunFam" id="3.40.50.2000:FF:000011">
    <property type="entry name" value="Glycogen synthase"/>
    <property type="match status" value="1"/>
</dbReference>
<dbReference type="Gene3D" id="3.40.50.2000">
    <property type="entry name" value="Glycogen Phosphorylase B"/>
    <property type="match status" value="2"/>
</dbReference>
<dbReference type="HAMAP" id="MF_00484">
    <property type="entry name" value="Glycogen_synth"/>
    <property type="match status" value="1"/>
</dbReference>
<dbReference type="InterPro" id="IPR001296">
    <property type="entry name" value="Glyco_trans_1"/>
</dbReference>
<dbReference type="InterPro" id="IPR011835">
    <property type="entry name" value="GS/SS"/>
</dbReference>
<dbReference type="InterPro" id="IPR013534">
    <property type="entry name" value="Starch_synth_cat_dom"/>
</dbReference>
<dbReference type="NCBIfam" id="TIGR02095">
    <property type="entry name" value="glgA"/>
    <property type="match status" value="1"/>
</dbReference>
<dbReference type="NCBIfam" id="NF001899">
    <property type="entry name" value="PRK00654.1-2"/>
    <property type="match status" value="1"/>
</dbReference>
<dbReference type="PANTHER" id="PTHR45825:SF11">
    <property type="entry name" value="ALPHA AMYLASE DOMAIN-CONTAINING PROTEIN"/>
    <property type="match status" value="1"/>
</dbReference>
<dbReference type="PANTHER" id="PTHR45825">
    <property type="entry name" value="GRANULE-BOUND STARCH SYNTHASE 1, CHLOROPLASTIC/AMYLOPLASTIC"/>
    <property type="match status" value="1"/>
</dbReference>
<dbReference type="Pfam" id="PF08323">
    <property type="entry name" value="Glyco_transf_5"/>
    <property type="match status" value="1"/>
</dbReference>
<dbReference type="Pfam" id="PF00534">
    <property type="entry name" value="Glycos_transf_1"/>
    <property type="match status" value="1"/>
</dbReference>
<dbReference type="SUPFAM" id="SSF53756">
    <property type="entry name" value="UDP-Glycosyltransferase/glycogen phosphorylase"/>
    <property type="match status" value="1"/>
</dbReference>
<protein>
    <recommendedName>
        <fullName evidence="1">Glycogen synthase</fullName>
        <ecNumber evidence="1">2.4.1.21</ecNumber>
    </recommendedName>
    <alternativeName>
        <fullName evidence="1">Starch [bacterial glycogen] synthase</fullName>
    </alternativeName>
</protein>
<evidence type="ECO:0000255" key="1">
    <source>
        <dbReference type="HAMAP-Rule" id="MF_00484"/>
    </source>
</evidence>
<proteinExistence type="inferred from homology"/>
<reference key="1">
    <citation type="journal article" date="2009" name="PLoS Genet.">
        <title>Organised genome dynamics in the Escherichia coli species results in highly diverse adaptive paths.</title>
        <authorList>
            <person name="Touchon M."/>
            <person name="Hoede C."/>
            <person name="Tenaillon O."/>
            <person name="Barbe V."/>
            <person name="Baeriswyl S."/>
            <person name="Bidet P."/>
            <person name="Bingen E."/>
            <person name="Bonacorsi S."/>
            <person name="Bouchier C."/>
            <person name="Bouvet O."/>
            <person name="Calteau A."/>
            <person name="Chiapello H."/>
            <person name="Clermont O."/>
            <person name="Cruveiller S."/>
            <person name="Danchin A."/>
            <person name="Diard M."/>
            <person name="Dossat C."/>
            <person name="Karoui M.E."/>
            <person name="Frapy E."/>
            <person name="Garry L."/>
            <person name="Ghigo J.M."/>
            <person name="Gilles A.M."/>
            <person name="Johnson J."/>
            <person name="Le Bouguenec C."/>
            <person name="Lescat M."/>
            <person name="Mangenot S."/>
            <person name="Martinez-Jehanne V."/>
            <person name="Matic I."/>
            <person name="Nassif X."/>
            <person name="Oztas S."/>
            <person name="Petit M.A."/>
            <person name="Pichon C."/>
            <person name="Rouy Z."/>
            <person name="Ruf C.S."/>
            <person name="Schneider D."/>
            <person name="Tourret J."/>
            <person name="Vacherie B."/>
            <person name="Vallenet D."/>
            <person name="Medigue C."/>
            <person name="Rocha E.P.C."/>
            <person name="Denamur E."/>
        </authorList>
    </citation>
    <scope>NUCLEOTIDE SEQUENCE [LARGE SCALE GENOMIC DNA]</scope>
    <source>
        <strain>IAI39 / ExPEC</strain>
    </source>
</reference>
<organism>
    <name type="scientific">Escherichia coli O7:K1 (strain IAI39 / ExPEC)</name>
    <dbReference type="NCBI Taxonomy" id="585057"/>
    <lineage>
        <taxon>Bacteria</taxon>
        <taxon>Pseudomonadati</taxon>
        <taxon>Pseudomonadota</taxon>
        <taxon>Gammaproteobacteria</taxon>
        <taxon>Enterobacterales</taxon>
        <taxon>Enterobacteriaceae</taxon>
        <taxon>Escherichia</taxon>
    </lineage>
</organism>